<evidence type="ECO:0000255" key="1">
    <source>
        <dbReference type="HAMAP-Rule" id="MF_00160"/>
    </source>
</evidence>
<proteinExistence type="inferred from homology"/>
<name>SERC_BACCR</name>
<protein>
    <recommendedName>
        <fullName evidence="1">Phosphoserine aminotransferase</fullName>
        <ecNumber evidence="1">2.6.1.52</ecNumber>
    </recommendedName>
    <alternativeName>
        <fullName evidence="1">Phosphohydroxythreonine aminotransferase</fullName>
        <shortName evidence="1">PSAT</shortName>
    </alternativeName>
</protein>
<organism>
    <name type="scientific">Bacillus cereus (strain ATCC 14579 / DSM 31 / CCUG 7414 / JCM 2152 / NBRC 15305 / NCIMB 9373 / NCTC 2599 / NRRL B-3711)</name>
    <dbReference type="NCBI Taxonomy" id="226900"/>
    <lineage>
        <taxon>Bacteria</taxon>
        <taxon>Bacillati</taxon>
        <taxon>Bacillota</taxon>
        <taxon>Bacilli</taxon>
        <taxon>Bacillales</taxon>
        <taxon>Bacillaceae</taxon>
        <taxon>Bacillus</taxon>
        <taxon>Bacillus cereus group</taxon>
    </lineage>
</organism>
<comment type="function">
    <text evidence="1">Catalyzes the reversible conversion of 3-phosphohydroxypyruvate to phosphoserine and of 3-hydroxy-2-oxo-4-phosphonooxybutanoate to phosphohydroxythreonine.</text>
</comment>
<comment type="catalytic activity">
    <reaction evidence="1">
        <text>O-phospho-L-serine + 2-oxoglutarate = 3-phosphooxypyruvate + L-glutamate</text>
        <dbReference type="Rhea" id="RHEA:14329"/>
        <dbReference type="ChEBI" id="CHEBI:16810"/>
        <dbReference type="ChEBI" id="CHEBI:18110"/>
        <dbReference type="ChEBI" id="CHEBI:29985"/>
        <dbReference type="ChEBI" id="CHEBI:57524"/>
        <dbReference type="EC" id="2.6.1.52"/>
    </reaction>
</comment>
<comment type="catalytic activity">
    <reaction evidence="1">
        <text>4-(phosphooxy)-L-threonine + 2-oxoglutarate = (R)-3-hydroxy-2-oxo-4-phosphooxybutanoate + L-glutamate</text>
        <dbReference type="Rhea" id="RHEA:16573"/>
        <dbReference type="ChEBI" id="CHEBI:16810"/>
        <dbReference type="ChEBI" id="CHEBI:29985"/>
        <dbReference type="ChEBI" id="CHEBI:58452"/>
        <dbReference type="ChEBI" id="CHEBI:58538"/>
        <dbReference type="EC" id="2.6.1.52"/>
    </reaction>
</comment>
<comment type="cofactor">
    <cofactor evidence="1">
        <name>pyridoxal 5'-phosphate</name>
        <dbReference type="ChEBI" id="CHEBI:597326"/>
    </cofactor>
    <text evidence="1">Binds 1 pyridoxal phosphate per subunit.</text>
</comment>
<comment type="pathway">
    <text evidence="1">Amino-acid biosynthesis; L-serine biosynthesis; L-serine from 3-phospho-D-glycerate: step 2/3.</text>
</comment>
<comment type="subunit">
    <text evidence="1">Homodimer.</text>
</comment>
<comment type="subcellular location">
    <subcellularLocation>
        <location evidence="1">Cytoplasm</location>
    </subcellularLocation>
</comment>
<comment type="similarity">
    <text evidence="1">Belongs to the class-V pyridoxal-phosphate-dependent aminotransferase family. SerC subfamily.</text>
</comment>
<gene>
    <name evidence="1" type="primary">serC</name>
    <name type="ordered locus">BC_3249</name>
</gene>
<dbReference type="EC" id="2.6.1.52" evidence="1"/>
<dbReference type="EMBL" id="AE016877">
    <property type="protein sequence ID" value="AAP10190.1"/>
    <property type="molecule type" value="Genomic_DNA"/>
</dbReference>
<dbReference type="RefSeq" id="NP_832989.1">
    <property type="nucleotide sequence ID" value="NC_004722.1"/>
</dbReference>
<dbReference type="RefSeq" id="WP_000442921.1">
    <property type="nucleotide sequence ID" value="NZ_CP138336.1"/>
</dbReference>
<dbReference type="SMR" id="Q81BC0"/>
<dbReference type="STRING" id="226900.BC_3249"/>
<dbReference type="KEGG" id="bce:BC3249"/>
<dbReference type="PATRIC" id="fig|226900.8.peg.3330"/>
<dbReference type="HOGENOM" id="CLU_034866_0_2_9"/>
<dbReference type="OrthoDB" id="9809412at2"/>
<dbReference type="UniPathway" id="UPA00135">
    <property type="reaction ID" value="UER00197"/>
</dbReference>
<dbReference type="Proteomes" id="UP000001417">
    <property type="component" value="Chromosome"/>
</dbReference>
<dbReference type="GO" id="GO:0005737">
    <property type="term" value="C:cytoplasm"/>
    <property type="evidence" value="ECO:0000318"/>
    <property type="project" value="GO_Central"/>
</dbReference>
<dbReference type="GO" id="GO:0004648">
    <property type="term" value="F:O-phospho-L-serine:2-oxoglutarate aminotransferase activity"/>
    <property type="evidence" value="ECO:0000318"/>
    <property type="project" value="GO_Central"/>
</dbReference>
<dbReference type="GO" id="GO:0030170">
    <property type="term" value="F:pyridoxal phosphate binding"/>
    <property type="evidence" value="ECO:0000318"/>
    <property type="project" value="GO_Central"/>
</dbReference>
<dbReference type="GO" id="GO:0006564">
    <property type="term" value="P:L-serine biosynthetic process"/>
    <property type="evidence" value="ECO:0000318"/>
    <property type="project" value="GO_Central"/>
</dbReference>
<dbReference type="CDD" id="cd00611">
    <property type="entry name" value="PSAT_like"/>
    <property type="match status" value="1"/>
</dbReference>
<dbReference type="FunFam" id="3.40.640.10:FF:000010">
    <property type="entry name" value="Phosphoserine aminotransferase"/>
    <property type="match status" value="1"/>
</dbReference>
<dbReference type="FunFam" id="3.90.1150.10:FF:000006">
    <property type="entry name" value="Phosphoserine aminotransferase"/>
    <property type="match status" value="1"/>
</dbReference>
<dbReference type="Gene3D" id="3.90.1150.10">
    <property type="entry name" value="Aspartate Aminotransferase, domain 1"/>
    <property type="match status" value="1"/>
</dbReference>
<dbReference type="Gene3D" id="3.40.640.10">
    <property type="entry name" value="Type I PLP-dependent aspartate aminotransferase-like (Major domain)"/>
    <property type="match status" value="1"/>
</dbReference>
<dbReference type="HAMAP" id="MF_00160">
    <property type="entry name" value="SerC_aminotrans_5"/>
    <property type="match status" value="1"/>
</dbReference>
<dbReference type="InterPro" id="IPR000192">
    <property type="entry name" value="Aminotrans_V_dom"/>
</dbReference>
<dbReference type="InterPro" id="IPR020578">
    <property type="entry name" value="Aminotrans_V_PyrdxlP_BS"/>
</dbReference>
<dbReference type="InterPro" id="IPR022278">
    <property type="entry name" value="Pser_aminoTfrase"/>
</dbReference>
<dbReference type="InterPro" id="IPR015424">
    <property type="entry name" value="PyrdxlP-dep_Trfase"/>
</dbReference>
<dbReference type="InterPro" id="IPR015421">
    <property type="entry name" value="PyrdxlP-dep_Trfase_major"/>
</dbReference>
<dbReference type="InterPro" id="IPR015422">
    <property type="entry name" value="PyrdxlP-dep_Trfase_small"/>
</dbReference>
<dbReference type="NCBIfam" id="NF003764">
    <property type="entry name" value="PRK05355.1"/>
    <property type="match status" value="1"/>
</dbReference>
<dbReference type="NCBIfam" id="TIGR01364">
    <property type="entry name" value="serC_1"/>
    <property type="match status" value="1"/>
</dbReference>
<dbReference type="PANTHER" id="PTHR43247">
    <property type="entry name" value="PHOSPHOSERINE AMINOTRANSFERASE"/>
    <property type="match status" value="1"/>
</dbReference>
<dbReference type="PANTHER" id="PTHR43247:SF1">
    <property type="entry name" value="PHOSPHOSERINE AMINOTRANSFERASE"/>
    <property type="match status" value="1"/>
</dbReference>
<dbReference type="Pfam" id="PF00266">
    <property type="entry name" value="Aminotran_5"/>
    <property type="match status" value="1"/>
</dbReference>
<dbReference type="PIRSF" id="PIRSF000525">
    <property type="entry name" value="SerC"/>
    <property type="match status" value="1"/>
</dbReference>
<dbReference type="SUPFAM" id="SSF53383">
    <property type="entry name" value="PLP-dependent transferases"/>
    <property type="match status" value="1"/>
</dbReference>
<dbReference type="PROSITE" id="PS00595">
    <property type="entry name" value="AA_TRANSFER_CLASS_5"/>
    <property type="match status" value="1"/>
</dbReference>
<feature type="chain" id="PRO_0000150145" description="Phosphoserine aminotransferase">
    <location>
        <begin position="1"/>
        <end position="360"/>
    </location>
</feature>
<feature type="binding site" evidence="1">
    <location>
        <position position="42"/>
    </location>
    <ligand>
        <name>L-glutamate</name>
        <dbReference type="ChEBI" id="CHEBI:29985"/>
    </ligand>
</feature>
<feature type="binding site" evidence="1">
    <location>
        <begin position="76"/>
        <end position="77"/>
    </location>
    <ligand>
        <name>pyridoxal 5'-phosphate</name>
        <dbReference type="ChEBI" id="CHEBI:597326"/>
    </ligand>
</feature>
<feature type="binding site" evidence="1">
    <location>
        <position position="102"/>
    </location>
    <ligand>
        <name>pyridoxal 5'-phosphate</name>
        <dbReference type="ChEBI" id="CHEBI:597326"/>
    </ligand>
</feature>
<feature type="binding site" evidence="1">
    <location>
        <position position="152"/>
    </location>
    <ligand>
        <name>pyridoxal 5'-phosphate</name>
        <dbReference type="ChEBI" id="CHEBI:597326"/>
    </ligand>
</feature>
<feature type="binding site" evidence="1">
    <location>
        <position position="172"/>
    </location>
    <ligand>
        <name>pyridoxal 5'-phosphate</name>
        <dbReference type="ChEBI" id="CHEBI:597326"/>
    </ligand>
</feature>
<feature type="binding site" evidence="1">
    <location>
        <position position="195"/>
    </location>
    <ligand>
        <name>pyridoxal 5'-phosphate</name>
        <dbReference type="ChEBI" id="CHEBI:597326"/>
    </ligand>
</feature>
<feature type="binding site" evidence="1">
    <location>
        <begin position="237"/>
        <end position="238"/>
    </location>
    <ligand>
        <name>pyridoxal 5'-phosphate</name>
        <dbReference type="ChEBI" id="CHEBI:597326"/>
    </ligand>
</feature>
<feature type="modified residue" description="N6-(pyridoxal phosphate)lysine" evidence="1">
    <location>
        <position position="196"/>
    </location>
</feature>
<keyword id="KW-0028">Amino-acid biosynthesis</keyword>
<keyword id="KW-0032">Aminotransferase</keyword>
<keyword id="KW-0963">Cytoplasm</keyword>
<keyword id="KW-0663">Pyridoxal phosphate</keyword>
<keyword id="KW-1185">Reference proteome</keyword>
<keyword id="KW-0718">Serine biosynthesis</keyword>
<keyword id="KW-0808">Transferase</keyword>
<reference key="1">
    <citation type="journal article" date="2003" name="Nature">
        <title>Genome sequence of Bacillus cereus and comparative analysis with Bacillus anthracis.</title>
        <authorList>
            <person name="Ivanova N."/>
            <person name="Sorokin A."/>
            <person name="Anderson I."/>
            <person name="Galleron N."/>
            <person name="Candelon B."/>
            <person name="Kapatral V."/>
            <person name="Bhattacharyya A."/>
            <person name="Reznik G."/>
            <person name="Mikhailova N."/>
            <person name="Lapidus A."/>
            <person name="Chu L."/>
            <person name="Mazur M."/>
            <person name="Goltsman E."/>
            <person name="Larsen N."/>
            <person name="D'Souza M."/>
            <person name="Walunas T."/>
            <person name="Grechkin Y."/>
            <person name="Pusch G."/>
            <person name="Haselkorn R."/>
            <person name="Fonstein M."/>
            <person name="Ehrlich S.D."/>
            <person name="Overbeek R."/>
            <person name="Kyrpides N.C."/>
        </authorList>
    </citation>
    <scope>NUCLEOTIDE SEQUENCE [LARGE SCALE GENOMIC DNA]</scope>
    <source>
        <strain>ATCC 14579 / DSM 31 / CCUG 7414 / JCM 2152 / NBRC 15305 / NCIMB 9373 / NCTC 2599 / NRRL B-3711</strain>
    </source>
</reference>
<accession>Q81BC0</accession>
<sequence length="360" mass="40499">MERVYNFSAGPSILPLPVLEKVQKELLNYNGTGMSIMEMSHRSSYFQSIIEEASNLLRELMSIPDEYEVLFLQGGASLQFSMIPLNLMNTYKKAGYVLTGSWSKKALQEAEKVGEVQVIASSEQEKFTTIPKLDGLLSDEKLDYVHITTNNTIEGTKYVDIPHVEKVPLVADMSSNILSERYDVSKFGLIYAGAQKNLGPAGLTIAIIKRDLIGEADRSCPTMLNYETYSKNNSLYNTPPSFSIYVTKLVLEWLKEQGGVSAIEEQNRMKSSLLYNFLDESKLFTSPVDPTYRSLMNIPFTTPSEELNSEFLQKAKERGLVTLKGHRSVGGMRASIYNAMPVQGVQQLVNYMKEFELENR</sequence>